<name>BRD7_PONAB</name>
<accession>Q5R8B0</accession>
<feature type="chain" id="PRO_0000227666" description="Bromodomain-containing protein 7">
    <location>
        <begin position="1"/>
        <end position="651"/>
    </location>
</feature>
<feature type="domain" description="Bromo" evidence="5">
    <location>
        <begin position="131"/>
        <end position="235"/>
    </location>
</feature>
<feature type="region of interest" description="Disordered" evidence="6">
    <location>
        <begin position="35"/>
        <end position="132"/>
    </location>
</feature>
<feature type="region of interest" description="Disordered" evidence="6">
    <location>
        <begin position="253"/>
        <end position="312"/>
    </location>
</feature>
<feature type="coiled-coil region" evidence="4">
    <location>
        <begin position="536"/>
        <end position="567"/>
    </location>
</feature>
<feature type="short sequence motif" description="Nuclear localization signal" evidence="1">
    <location>
        <begin position="65"/>
        <end position="96"/>
    </location>
</feature>
<feature type="compositionally biased region" description="Polar residues" evidence="6">
    <location>
        <begin position="35"/>
        <end position="45"/>
    </location>
</feature>
<feature type="compositionally biased region" description="Basic and acidic residues" evidence="6">
    <location>
        <begin position="47"/>
        <end position="57"/>
    </location>
</feature>
<feature type="compositionally biased region" description="Basic residues" evidence="6">
    <location>
        <begin position="58"/>
        <end position="69"/>
    </location>
</feature>
<feature type="compositionally biased region" description="Basic and acidic residues" evidence="6">
    <location>
        <begin position="70"/>
        <end position="106"/>
    </location>
</feature>
<feature type="compositionally biased region" description="Basic and acidic residues" evidence="6">
    <location>
        <begin position="273"/>
        <end position="312"/>
    </location>
</feature>
<feature type="modified residue" description="Phosphoserine" evidence="3">
    <location>
        <position position="279"/>
    </location>
</feature>
<feature type="modified residue" description="Phosphoserine" evidence="3">
    <location>
        <position position="289"/>
    </location>
</feature>
<feature type="modified residue" description="N6-acetyllysine" evidence="2">
    <location>
        <position position="328"/>
    </location>
</feature>
<feature type="modified residue" description="Phosphoserine" evidence="3">
    <location>
        <position position="380"/>
    </location>
</feature>
<feature type="modified residue" description="Phosphoserine" evidence="2">
    <location>
        <position position="482"/>
    </location>
</feature>
<feature type="modified residue" description="Phosphothreonine" evidence="3">
    <location>
        <position position="514"/>
    </location>
</feature>
<feature type="modified residue" description="Phosphoserine" evidence="3">
    <location>
        <position position="621"/>
    </location>
</feature>
<feature type="cross-link" description="Glycyl lysine isopeptide (Lys-Gly) (interchain with G-Cter in SUMO2)" evidence="3">
    <location>
        <position position="21"/>
    </location>
</feature>
<feature type="cross-link" description="Glycyl lysine isopeptide (Lys-Gly) (interchain with G-Cter in SUMO2)" evidence="3">
    <location>
        <position position="52"/>
    </location>
</feature>
<feature type="cross-link" description="Glycyl lysine isopeptide (Lys-Gly) (interchain with G-Cter in SUMO2)" evidence="3">
    <location>
        <position position="127"/>
    </location>
</feature>
<feature type="cross-link" description="Glycyl lysine isopeptide (Lys-Gly) (interchain with G-Cter in SUMO2)" evidence="3">
    <location>
        <position position="186"/>
    </location>
</feature>
<feature type="cross-link" description="Glycyl lysine isopeptide (Lys-Gly) (interchain with G-Cter in SUMO2)" evidence="3">
    <location>
        <position position="197"/>
    </location>
</feature>
<feature type="cross-link" description="Glycyl lysine isopeptide (Lys-Gly) (interchain with G-Cter in SUMO2)" evidence="3">
    <location>
        <position position="201"/>
    </location>
</feature>
<feature type="cross-link" description="Glycyl lysine isopeptide (Lys-Gly) (interchain with G-Cter in SUMO2)" evidence="3">
    <location>
        <position position="212"/>
    </location>
</feature>
<feature type="cross-link" description="Glycyl lysine isopeptide (Lys-Gly) (interchain with G-Cter in SUMO2)" evidence="3">
    <location>
        <position position="241"/>
    </location>
</feature>
<feature type="cross-link" description="Glycyl lysine isopeptide (Lys-Gly) (interchain with G-Cter in SUMO2)" evidence="3">
    <location>
        <position position="305"/>
    </location>
</feature>
<feature type="cross-link" description="Glycyl lysine isopeptide (Lys-Gly) (interchain with G-Cter in SUMO2)" evidence="3">
    <location>
        <position position="307"/>
    </location>
</feature>
<feature type="cross-link" description="Glycyl lysine isopeptide (Lys-Gly) (interchain with G-Cter in SUMO2)" evidence="3">
    <location>
        <position position="344"/>
    </location>
</feature>
<feature type="cross-link" description="Glycyl lysine isopeptide (Lys-Gly) (interchain with G-Cter in SUMO2)" evidence="3">
    <location>
        <position position="389"/>
    </location>
</feature>
<keyword id="KW-0007">Acetylation</keyword>
<keyword id="KW-0103">Bromodomain</keyword>
<keyword id="KW-0131">Cell cycle</keyword>
<keyword id="KW-0158">Chromosome</keyword>
<keyword id="KW-0175">Coiled coil</keyword>
<keyword id="KW-1017">Isopeptide bond</keyword>
<keyword id="KW-0539">Nucleus</keyword>
<keyword id="KW-0597">Phosphoprotein</keyword>
<keyword id="KW-1185">Reference proteome</keyword>
<keyword id="KW-0804">Transcription</keyword>
<keyword id="KW-0805">Transcription regulation</keyword>
<keyword id="KW-0043">Tumor suppressor</keyword>
<keyword id="KW-0832">Ubl conjugation</keyword>
<keyword id="KW-0879">Wnt signaling pathway</keyword>
<sequence>MGKKHKKHKSDKHLYEEYVEKPLKLVLKVGGNEVTELSTGSSGHDSSLFEDKNDHDKHKDRKRKKRKKGEKQIPGEEKGRKRRRVKEDKKKRDRDRVENEAEKDLQCHAPVRLDLPPEKPLTSSLAKQEEVEQTPLQEALNQLMRQLQRKDPSAFFSFPVTDFIAPGYSMIIKHPMDFSTMKEKIKNNDYQSIEELKDNFKLMCTNAMIYNKPETIYYKAAKKLLHSGMKILSQERIQSLKQSIDFMADLQKTRKQKDGTDTSQSGEDGGCWQREREDSGDAEAHASKSPSKENKKKDNDMLEDKFKSNNLEREQEQLDRIVKESGGKLTRRLVNSQCEFERRKPDGTTTLGLLHPVDPIVGEPGYCPVRLGMTTGRLQSGVNTLQGFKEDKRNKVTPVLYLNYGPYSSYAPHYDSTFANISKDDSDLIYSTYGEDSDLPSDFSIHEFLATCQDYPYVMADSLLDVLTKGGHSRTLQEMEMSLPEDEGHTRTLDTAKEMEITEVEPPGRLDSSTQDRLIALKAVTNFGVPVEVFDSEEAEIFQKKLDETTRLLRELQEAQNERLSTRPPPNMICLLGPSYREMHLAEQVTNNLKELAQQVTPGDIVSTYGVRKAMGISIPSPVMENNFVDLTEDTEEPKKTDVAECGPGGS</sequence>
<organism>
    <name type="scientific">Pongo abelii</name>
    <name type="common">Sumatran orangutan</name>
    <name type="synonym">Pongo pygmaeus abelii</name>
    <dbReference type="NCBI Taxonomy" id="9601"/>
    <lineage>
        <taxon>Eukaryota</taxon>
        <taxon>Metazoa</taxon>
        <taxon>Chordata</taxon>
        <taxon>Craniata</taxon>
        <taxon>Vertebrata</taxon>
        <taxon>Euteleostomi</taxon>
        <taxon>Mammalia</taxon>
        <taxon>Eutheria</taxon>
        <taxon>Euarchontoglires</taxon>
        <taxon>Primates</taxon>
        <taxon>Haplorrhini</taxon>
        <taxon>Catarrhini</taxon>
        <taxon>Hominidae</taxon>
        <taxon>Pongo</taxon>
    </lineage>
</organism>
<gene>
    <name type="primary">BRD7</name>
</gene>
<proteinExistence type="evidence at transcript level"/>
<dbReference type="EMBL" id="CR859843">
    <property type="protein sequence ID" value="CAH92000.1"/>
    <property type="molecule type" value="mRNA"/>
</dbReference>
<dbReference type="BMRB" id="Q5R8B0"/>
<dbReference type="SMR" id="Q5R8B0"/>
<dbReference type="FunCoup" id="Q5R8B0">
    <property type="interactions" value="3790"/>
</dbReference>
<dbReference type="STRING" id="9601.ENSPPYP00000008289"/>
<dbReference type="eggNOG" id="KOG1828">
    <property type="taxonomic scope" value="Eukaryota"/>
</dbReference>
<dbReference type="InParanoid" id="Q5R8B0"/>
<dbReference type="Proteomes" id="UP000001595">
    <property type="component" value="Unplaced"/>
</dbReference>
<dbReference type="GO" id="GO:0005694">
    <property type="term" value="C:chromosome"/>
    <property type="evidence" value="ECO:0007669"/>
    <property type="project" value="UniProtKB-SubCell"/>
</dbReference>
<dbReference type="GO" id="GO:0005634">
    <property type="term" value="C:nucleus"/>
    <property type="evidence" value="ECO:0000250"/>
    <property type="project" value="UniProtKB"/>
</dbReference>
<dbReference type="GO" id="GO:0140015">
    <property type="term" value="F:histone H3K14ac reader activity"/>
    <property type="evidence" value="ECO:0000250"/>
    <property type="project" value="UniProtKB"/>
</dbReference>
<dbReference type="GO" id="GO:0070577">
    <property type="term" value="F:lysine-acetylated histone binding"/>
    <property type="evidence" value="ECO:0007669"/>
    <property type="project" value="TreeGrafter"/>
</dbReference>
<dbReference type="GO" id="GO:0002039">
    <property type="term" value="F:p53 binding"/>
    <property type="evidence" value="ECO:0000250"/>
    <property type="project" value="UniProtKB"/>
</dbReference>
<dbReference type="GO" id="GO:0003713">
    <property type="term" value="F:transcription coactivator activity"/>
    <property type="evidence" value="ECO:0000250"/>
    <property type="project" value="UniProtKB"/>
</dbReference>
<dbReference type="GO" id="GO:0003714">
    <property type="term" value="F:transcription corepressor activity"/>
    <property type="evidence" value="ECO:0000250"/>
    <property type="project" value="UniProtKB"/>
</dbReference>
<dbReference type="GO" id="GO:0045892">
    <property type="term" value="P:negative regulation of DNA-templated transcription"/>
    <property type="evidence" value="ECO:0000250"/>
    <property type="project" value="UniProtKB"/>
</dbReference>
<dbReference type="GO" id="GO:2000134">
    <property type="term" value="P:negative regulation of G1/S transition of mitotic cell cycle"/>
    <property type="evidence" value="ECO:0000250"/>
    <property type="project" value="UniProtKB"/>
</dbReference>
<dbReference type="GO" id="GO:0006357">
    <property type="term" value="P:regulation of transcription by RNA polymerase II"/>
    <property type="evidence" value="ECO:0007669"/>
    <property type="project" value="TreeGrafter"/>
</dbReference>
<dbReference type="GO" id="GO:0045815">
    <property type="term" value="P:transcription initiation-coupled chromatin remodeling"/>
    <property type="evidence" value="ECO:0000250"/>
    <property type="project" value="UniProtKB"/>
</dbReference>
<dbReference type="GO" id="GO:0016055">
    <property type="term" value="P:Wnt signaling pathway"/>
    <property type="evidence" value="ECO:0007669"/>
    <property type="project" value="UniProtKB-KW"/>
</dbReference>
<dbReference type="CDD" id="cd05513">
    <property type="entry name" value="Bromo_brd7_like"/>
    <property type="match status" value="1"/>
</dbReference>
<dbReference type="FunFam" id="1.20.920.10:FF:000022">
    <property type="entry name" value="Putative bromodomain-containing protein 9"/>
    <property type="match status" value="1"/>
</dbReference>
<dbReference type="Gene3D" id="1.20.920.10">
    <property type="entry name" value="Bromodomain-like"/>
    <property type="match status" value="1"/>
</dbReference>
<dbReference type="InterPro" id="IPR001487">
    <property type="entry name" value="Bromodomain"/>
</dbReference>
<dbReference type="InterPro" id="IPR036427">
    <property type="entry name" value="Bromodomain-like_sf"/>
</dbReference>
<dbReference type="InterPro" id="IPR051831">
    <property type="entry name" value="Bromodomain_contain_prot"/>
</dbReference>
<dbReference type="InterPro" id="IPR021900">
    <property type="entry name" value="DUF3512"/>
</dbReference>
<dbReference type="PANTHER" id="PTHR22881">
    <property type="entry name" value="BROMODOMAIN CONTAINING PROTEIN"/>
    <property type="match status" value="1"/>
</dbReference>
<dbReference type="PANTHER" id="PTHR22881:SF12">
    <property type="entry name" value="BROMODOMAIN-CONTAINING PROTEIN 7"/>
    <property type="match status" value="1"/>
</dbReference>
<dbReference type="Pfam" id="PF00439">
    <property type="entry name" value="Bromodomain"/>
    <property type="match status" value="1"/>
</dbReference>
<dbReference type="Pfam" id="PF12024">
    <property type="entry name" value="DUF3512"/>
    <property type="match status" value="1"/>
</dbReference>
<dbReference type="PRINTS" id="PR00503">
    <property type="entry name" value="BROMODOMAIN"/>
</dbReference>
<dbReference type="SMART" id="SM00297">
    <property type="entry name" value="BROMO"/>
    <property type="match status" value="1"/>
</dbReference>
<dbReference type="SUPFAM" id="SSF47370">
    <property type="entry name" value="Bromodomain"/>
    <property type="match status" value="1"/>
</dbReference>
<dbReference type="PROSITE" id="PS50014">
    <property type="entry name" value="BROMODOMAIN_2"/>
    <property type="match status" value="1"/>
</dbReference>
<evidence type="ECO:0000250" key="1"/>
<evidence type="ECO:0000250" key="2">
    <source>
        <dbReference type="UniProtKB" id="O88665"/>
    </source>
</evidence>
<evidence type="ECO:0000250" key="3">
    <source>
        <dbReference type="UniProtKB" id="Q9NPI1"/>
    </source>
</evidence>
<evidence type="ECO:0000255" key="4"/>
<evidence type="ECO:0000255" key="5">
    <source>
        <dbReference type="PROSITE-ProRule" id="PRU00035"/>
    </source>
</evidence>
<evidence type="ECO:0000256" key="6">
    <source>
        <dbReference type="SAM" id="MobiDB-lite"/>
    </source>
</evidence>
<reference key="1">
    <citation type="submission" date="2004-11" db="EMBL/GenBank/DDBJ databases">
        <authorList>
            <consortium name="The German cDNA consortium"/>
        </authorList>
    </citation>
    <scope>NUCLEOTIDE SEQUENCE [LARGE SCALE MRNA]</scope>
    <source>
        <tissue>Heart</tissue>
    </source>
</reference>
<protein>
    <recommendedName>
        <fullName>Bromodomain-containing protein 7</fullName>
    </recommendedName>
</protein>
<comment type="function">
    <text evidence="1">Acts both as coactivator and as corepressor. May play a role in chromatin remodeling. Activator of the Wnt signaling pathway in a DVL1-dependent manner by negatively regulating the GSK3B phosphotransferase activity. Induces dephosphorylation of GSK3B at 'Tyr-216'. Down-regulates TRIM24-mediated activation of transcriptional activation by AR. Transcriptional corepressor that down-regulates the expression of target genes. Binds to target promoters, leading to increased histone H3 acetylation at 'Lys-9' (H3K9ac). Binds to the ESR1 promoter. Recruits BRCA1 and POU2F1 to the ESR1 promoter. Coactivator for TP53-mediated activation of transcription of a set of target genes. Required for TP53-mediated cell-cycle arrest in response to oncogene activation. Promotes acetylation of TP53 at 'Lys-382', and thereby promotes efficient recruitment of TP53 to target promoters. Inhibits cell cycle progression from G1 to S phase (By similarity).</text>
</comment>
<comment type="subunit">
    <text evidence="1">Interacts with TRIM24, PTPN13 and DVL1. Identified in a complex with SMARCA4/BRG1, SMARCC1/BAF155, SMARCE1/BAF57, DPF2/BAF45D and ARID2, subunits of the SWI/SNF-B (PBAF) chromatin remodeling complex. Interacts with IRF2 and HNRPUL1. Interacts (via N-terminus) with TP53. Interacts (via C-terminus) with EP300. Interacts with BRCA1. Interacts (via bromo domain) with histone H3 (via N-terminus) acetylated at 'Lys-14' (H3K14ac). Has low affinity for histone H3 acetylated at 'Lys-9' (H3K9ac). Has the highest affinity for histone H3 that is acetylated both at 'Lys-9' (H3K9ac) and at 'Lys-14' (H3K14ac). Has very low affinity for non-acetylated histone H3. Interacts (via bromo domain) with histone H4 (via N-terminus) acetylated at 'Lys-8' (H3K8ac) (in vitro) (By similarity).</text>
</comment>
<comment type="subcellular location">
    <subcellularLocation>
        <location evidence="3">Nucleus</location>
    </subcellularLocation>
    <subcellularLocation>
        <location evidence="3">Chromosome</location>
    </subcellularLocation>
</comment>